<organism>
    <name type="scientific">Lachancea kluyveri (strain ATCC 58438 / CBS 3082 / BCRC 21498 / NBRC 1685 / JCM 7257 / NCYC 543 / NRRL Y-12651)</name>
    <name type="common">Yeast</name>
    <name type="synonym">Saccharomyces kluyveri</name>
    <dbReference type="NCBI Taxonomy" id="226302"/>
    <lineage>
        <taxon>Eukaryota</taxon>
        <taxon>Fungi</taxon>
        <taxon>Dikarya</taxon>
        <taxon>Ascomycota</taxon>
        <taxon>Saccharomycotina</taxon>
        <taxon>Saccharomycetes</taxon>
        <taxon>Saccharomycetales</taxon>
        <taxon>Saccharomycetaceae</taxon>
        <taxon>Lachancea</taxon>
    </lineage>
</organism>
<protein>
    <recommendedName>
        <fullName>Dihydropyrimidinase</fullName>
        <shortName>DHP</shortName>
        <shortName>DHPase</shortName>
        <ecNumber evidence="1">3.5.2.2</ecNumber>
    </recommendedName>
    <alternativeName>
        <fullName>5,6-dihydropyrimidine amidohydrolase</fullName>
    </alternativeName>
    <alternativeName>
        <fullName>Hydantoinase</fullName>
    </alternativeName>
</protein>
<name>DPYS_LACK1</name>
<gene>
    <name type="primary">PYD2</name>
</gene>
<comment type="function">
    <text evidence="1">Catalyzes the second step of the reductive pyrimidine degradation, the reversible hydrolytic ring opening of dihydropyrimidines. Can catalyze the ring opening of 5,6-dihydrouracil to N-carbamyl-alanine and of 5,6-dihydrothymine to N-carbamyl-amino isobutyrate.</text>
</comment>
<comment type="catalytic activity">
    <reaction evidence="1">
        <text>5,6-dihydrouracil + H2O = 3-(carbamoylamino)propanoate + H(+)</text>
        <dbReference type="Rhea" id="RHEA:16121"/>
        <dbReference type="ChEBI" id="CHEBI:11892"/>
        <dbReference type="ChEBI" id="CHEBI:15377"/>
        <dbReference type="ChEBI" id="CHEBI:15378"/>
        <dbReference type="ChEBI" id="CHEBI:15901"/>
        <dbReference type="EC" id="3.5.2.2"/>
    </reaction>
</comment>
<comment type="cofactor">
    <cofactor evidence="2">
        <name>Zn(2+)</name>
        <dbReference type="ChEBI" id="CHEBI:29105"/>
    </cofactor>
    <text evidence="2">Binds 2 Zn(2+) ions per subunit.</text>
</comment>
<comment type="biophysicochemical properties">
    <kinetics>
        <KM evidence="1">0.6 mM for dihydrouracil</KM>
        <KM evidence="1">0.235 mM for dihydrothymine</KM>
    </kinetics>
</comment>
<comment type="subunit">
    <text evidence="1 2">Homotetramer.</text>
</comment>
<comment type="induction">
    <text evidence="1">Up-regulated by dihydrouracil and N-carbamyl-beta-alanine. Detectable only in cells grown on dihydrouracil and N-carbamyl-beta-alanine as sole nitrogen source.</text>
</comment>
<comment type="PTM">
    <text evidence="2">Carboxylation allows a single lysine to coordinate two zinc ions.</text>
</comment>
<comment type="similarity">
    <text evidence="3">Belongs to the metallo-dependent hydrolases superfamily. Hydantoinase/dihydropyrimidinase family.</text>
</comment>
<reference key="1">
    <citation type="journal article" date="2000" name="J. Mol. Biol.">
        <title>PYD2 encodes 5,6-dihydropyrimidine amidohydrolase, which participates in a novel fungal catabolic pathway.</title>
        <authorList>
            <person name="Gojkovic Z."/>
            <person name="Jahnke K."/>
            <person name="Schnackerz K.D."/>
            <person name="Piskur J."/>
        </authorList>
    </citation>
    <scope>NUCLEOTIDE SEQUENCE [GENOMIC DNA]</scope>
    <scope>PROTEIN SEQUENCE OF 1-11</scope>
    <scope>FUNCTION</scope>
    <scope>SUBUNIT</scope>
    <scope>BIOPHYSICOCHEMICAL PROPERTIES</scope>
    <scope>CATALYTIC ACTIVITY</scope>
    <scope>INDUCTION</scope>
    <source>
        <strain>ATCC 58438 / CBS 3082 / BCRC 21498 / NBRC 1685 / JCM 7257 / NCYC 543 / NRRL Y-12651</strain>
    </source>
</reference>
<reference key="2">
    <citation type="journal article" date="2006" name="J. Biol. Chem.">
        <title>The crystal structures of dihydropyrimidinases reaffirm the close relationship between cyclic amidohydrolases and explain their substrate specificity.</title>
        <authorList>
            <person name="Lohkamp B."/>
            <person name="Andersen B."/>
            <person name="Piskur J."/>
            <person name="Dobritzsch D."/>
        </authorList>
    </citation>
    <scope>X-RAY CRYSTALLOGRAPHY (2.40 ANGSTROMS) OF 2-542 IN COMPLEXES WITH ZINC IONS; SUBSTRATE AND PRODUCT</scope>
    <scope>CARBOXYLATION AT LYS-167</scope>
    <scope>SUBUNIT</scope>
</reference>
<sequence length="542" mass="60240">MPIYDLIIKNGIICTASDIYAAEIAVNNGKVQLIAASIDPSLGSEVIDAEGAFITPGGIDAHVHVDEPLKLLGDVVDTMEHATRSAVAGGTTTVVAFSTQDVSKKGPSALAESVKLDVDEYSEQTLYCDYGLHLILFQIEKPSVEARELLDVQLQAAYNDYGVSSVKMFMTYPGLQISDYDIMSAMYATRKNGFTTMLHAENGDMVKWMIEALEEQGLTDAYYHGVSRPSIVEGEATNRAITLATTMDTPILFVHVSSPQAAEVIKQAQTKGLKVYAETCPQYALLSDAITRCHHHGEVESYGVGIDLSSISESPFTNPDDRFIGSKYICSPPIRPEGTQKSIWKGMNNGTFTIVGSDHCSYNYYEKTSTASKHRAFDPENNKNGEFRYIPNGLPGVCTRMPLLYDYGYLRGNLTSMMKLVEIQCTNPAKVYGMYPQKGSILPGVSDADLVIWYPDDSKKEYNSKPKLITNKLMEHNCDYTPFEGIEIKNWPRYTIVKGKIVYKEGEILKENADGKYLKRGKSFMCTPKNEWVTEWRPKYES</sequence>
<evidence type="ECO:0000269" key="1">
    <source>
    </source>
</evidence>
<evidence type="ECO:0000269" key="2">
    <source>
    </source>
</evidence>
<evidence type="ECO:0000305" key="3"/>
<evidence type="ECO:0007744" key="4">
    <source>
        <dbReference type="PDB" id="2FTY"/>
    </source>
</evidence>
<evidence type="ECO:0007744" key="5">
    <source>
        <dbReference type="PDB" id="2FVK"/>
    </source>
</evidence>
<evidence type="ECO:0007744" key="6">
    <source>
        <dbReference type="PDB" id="2FVM"/>
    </source>
</evidence>
<evidence type="ECO:0007829" key="7">
    <source>
        <dbReference type="PDB" id="2FTY"/>
    </source>
</evidence>
<evidence type="ECO:0007829" key="8">
    <source>
        <dbReference type="PDB" id="2FVK"/>
    </source>
</evidence>
<proteinExistence type="evidence at protein level"/>
<dbReference type="EC" id="3.5.2.2" evidence="1"/>
<dbReference type="EMBL" id="AF156967">
    <property type="protein sequence ID" value="AAF69237.1"/>
    <property type="molecule type" value="Genomic_DNA"/>
</dbReference>
<dbReference type="PDB" id="2FTY">
    <property type="method" value="X-ray"/>
    <property type="resolution" value="2.40 A"/>
    <property type="chains" value="A/B/C/D=2-542"/>
</dbReference>
<dbReference type="PDB" id="2FVK">
    <property type="method" value="X-ray"/>
    <property type="resolution" value="2.40 A"/>
    <property type="chains" value="A/B/C/D=2-542"/>
</dbReference>
<dbReference type="PDB" id="2FVM">
    <property type="method" value="X-ray"/>
    <property type="resolution" value="2.45 A"/>
    <property type="chains" value="A/B/C/D=2-542"/>
</dbReference>
<dbReference type="PDBsum" id="2FTY"/>
<dbReference type="PDBsum" id="2FVK"/>
<dbReference type="PDBsum" id="2FVM"/>
<dbReference type="SMR" id="Q9P903"/>
<dbReference type="BRENDA" id="3.5.2.2">
    <property type="organism ID" value="6897"/>
</dbReference>
<dbReference type="SABIO-RK" id="Q9P903"/>
<dbReference type="EvolutionaryTrace" id="Q9P903"/>
<dbReference type="GO" id="GO:0005737">
    <property type="term" value="C:cytoplasm"/>
    <property type="evidence" value="ECO:0007669"/>
    <property type="project" value="InterPro"/>
</dbReference>
<dbReference type="GO" id="GO:0004157">
    <property type="term" value="F:dihydropyrimidinase activity"/>
    <property type="evidence" value="ECO:0007669"/>
    <property type="project" value="UniProtKB-EC"/>
</dbReference>
<dbReference type="GO" id="GO:0046872">
    <property type="term" value="F:metal ion binding"/>
    <property type="evidence" value="ECO:0007669"/>
    <property type="project" value="UniProtKB-KW"/>
</dbReference>
<dbReference type="CDD" id="cd01314">
    <property type="entry name" value="D-HYD"/>
    <property type="match status" value="1"/>
</dbReference>
<dbReference type="FunFam" id="3.20.20.140:FF:000174">
    <property type="entry name" value="Dihydropyrimidinase-related protein 2"/>
    <property type="match status" value="1"/>
</dbReference>
<dbReference type="Gene3D" id="3.20.20.140">
    <property type="entry name" value="Metal-dependent hydrolases"/>
    <property type="match status" value="1"/>
</dbReference>
<dbReference type="InterPro" id="IPR006680">
    <property type="entry name" value="Amidohydro-rel"/>
</dbReference>
<dbReference type="InterPro" id="IPR011778">
    <property type="entry name" value="Hydantoinase/dihydroPyrase"/>
</dbReference>
<dbReference type="InterPro" id="IPR011059">
    <property type="entry name" value="Metal-dep_hydrolase_composite"/>
</dbReference>
<dbReference type="InterPro" id="IPR032466">
    <property type="entry name" value="Metal_Hydrolase"/>
</dbReference>
<dbReference type="InterPro" id="IPR050378">
    <property type="entry name" value="Metallo-dep_Hydrolases_sf"/>
</dbReference>
<dbReference type="PANTHER" id="PTHR11647:SF1">
    <property type="entry name" value="COLLAPSIN RESPONSE MEDIATOR PROTEIN"/>
    <property type="match status" value="1"/>
</dbReference>
<dbReference type="PANTHER" id="PTHR11647">
    <property type="entry name" value="HYDRANTOINASE/DIHYDROPYRIMIDINASE FAMILY MEMBER"/>
    <property type="match status" value="1"/>
</dbReference>
<dbReference type="Pfam" id="PF01979">
    <property type="entry name" value="Amidohydro_1"/>
    <property type="match status" value="1"/>
</dbReference>
<dbReference type="SUPFAM" id="SSF51338">
    <property type="entry name" value="Composite domain of metallo-dependent hydrolases"/>
    <property type="match status" value="1"/>
</dbReference>
<dbReference type="SUPFAM" id="SSF51556">
    <property type="entry name" value="Metallo-dependent hydrolases"/>
    <property type="match status" value="1"/>
</dbReference>
<keyword id="KW-0002">3D-structure</keyword>
<keyword id="KW-0903">Direct protein sequencing</keyword>
<keyword id="KW-0378">Hydrolase</keyword>
<keyword id="KW-0479">Metal-binding</keyword>
<keyword id="KW-0862">Zinc</keyword>
<feature type="chain" id="PRO_0000313804" description="Dihydropyrimidinase">
    <location>
        <begin position="1"/>
        <end position="542"/>
    </location>
</feature>
<feature type="binding site" evidence="2 4 5 6">
    <location>
        <position position="62"/>
    </location>
    <ligand>
        <name>Zn(2+)</name>
        <dbReference type="ChEBI" id="CHEBI:29105"/>
        <label>1</label>
    </ligand>
</feature>
<feature type="binding site" evidence="2 4 5 6">
    <location>
        <position position="64"/>
    </location>
    <ligand>
        <name>Zn(2+)</name>
        <dbReference type="ChEBI" id="CHEBI:29105"/>
        <label>1</label>
    </ligand>
</feature>
<feature type="binding site" description="via carbamate group" evidence="2 4 5 6">
    <location>
        <position position="167"/>
    </location>
    <ligand>
        <name>Zn(2+)</name>
        <dbReference type="ChEBI" id="CHEBI:29105"/>
        <label>1</label>
    </ligand>
</feature>
<feature type="binding site" description="via carbamate group" evidence="2 4 5 6">
    <location>
        <position position="167"/>
    </location>
    <ligand>
        <name>Zn(2+)</name>
        <dbReference type="ChEBI" id="CHEBI:29105"/>
        <label>2</label>
    </ligand>
</feature>
<feature type="binding site" evidence="2 5">
    <location>
        <position position="172"/>
    </location>
    <ligand>
        <name>substrate</name>
    </ligand>
</feature>
<feature type="binding site" evidence="2 4 5 6">
    <location>
        <position position="199"/>
    </location>
    <ligand>
        <name>Zn(2+)</name>
        <dbReference type="ChEBI" id="CHEBI:29105"/>
        <label>2</label>
    </ligand>
</feature>
<feature type="binding site" evidence="2 4 5 6">
    <location>
        <position position="255"/>
    </location>
    <ligand>
        <name>Zn(2+)</name>
        <dbReference type="ChEBI" id="CHEBI:29105"/>
        <label>2</label>
    </ligand>
</feature>
<feature type="binding site" evidence="2 5">
    <location>
        <position position="331"/>
    </location>
    <ligand>
        <name>substrate</name>
    </ligand>
</feature>
<feature type="binding site" evidence="2 4 5 6">
    <location>
        <position position="358"/>
    </location>
    <ligand>
        <name>Zn(2+)</name>
        <dbReference type="ChEBI" id="CHEBI:29105"/>
        <label>1</label>
    </ligand>
</feature>
<feature type="binding site" evidence="2 5">
    <location>
        <position position="392"/>
    </location>
    <ligand>
        <name>substrate</name>
    </ligand>
</feature>
<feature type="modified residue" description="N6-carboxylysine" evidence="2 4 5 6">
    <location>
        <position position="167"/>
    </location>
</feature>
<feature type="strand" evidence="7">
    <location>
        <begin position="4"/>
        <end position="10"/>
    </location>
</feature>
<feature type="strand" evidence="7">
    <location>
        <begin position="12"/>
        <end position="14"/>
    </location>
</feature>
<feature type="strand" evidence="7">
    <location>
        <begin position="19"/>
        <end position="21"/>
    </location>
</feature>
<feature type="strand" evidence="7">
    <location>
        <begin position="23"/>
        <end position="27"/>
    </location>
</feature>
<feature type="strand" evidence="7">
    <location>
        <begin position="30"/>
        <end position="36"/>
    </location>
</feature>
<feature type="helix" evidence="7">
    <location>
        <begin position="40"/>
        <end position="42"/>
    </location>
</feature>
<feature type="strand" evidence="7">
    <location>
        <begin position="43"/>
        <end position="48"/>
    </location>
</feature>
<feature type="strand" evidence="7">
    <location>
        <begin position="53"/>
        <end position="56"/>
    </location>
</feature>
<feature type="strand" evidence="7">
    <location>
        <begin position="58"/>
        <end position="60"/>
    </location>
</feature>
<feature type="helix" evidence="7">
    <location>
        <begin position="79"/>
        <end position="88"/>
    </location>
</feature>
<feature type="strand" evidence="7">
    <location>
        <begin position="91"/>
        <end position="99"/>
    </location>
</feature>
<feature type="helix" evidence="7">
    <location>
        <begin position="109"/>
        <end position="121"/>
    </location>
</feature>
<feature type="strand" evidence="7">
    <location>
        <begin position="127"/>
        <end position="135"/>
    </location>
</feature>
<feature type="helix" evidence="7">
    <location>
        <begin position="143"/>
        <end position="161"/>
    </location>
</feature>
<feature type="strand" evidence="7">
    <location>
        <begin position="165"/>
        <end position="172"/>
    </location>
</feature>
<feature type="turn" evidence="7">
    <location>
        <begin position="173"/>
        <end position="175"/>
    </location>
</feature>
<feature type="helix" evidence="7">
    <location>
        <begin position="179"/>
        <end position="192"/>
    </location>
</feature>
<feature type="strand" evidence="7">
    <location>
        <begin position="195"/>
        <end position="199"/>
    </location>
</feature>
<feature type="helix" evidence="7">
    <location>
        <begin position="203"/>
        <end position="215"/>
    </location>
</feature>
<feature type="helix" evidence="7">
    <location>
        <begin position="223"/>
        <end position="226"/>
    </location>
</feature>
<feature type="helix" evidence="7">
    <location>
        <begin position="230"/>
        <end position="246"/>
    </location>
</feature>
<feature type="strand" evidence="7">
    <location>
        <begin position="251"/>
        <end position="253"/>
    </location>
</feature>
<feature type="helix" evidence="7">
    <location>
        <begin position="259"/>
        <end position="270"/>
    </location>
</feature>
<feature type="strand" evidence="7">
    <location>
        <begin position="275"/>
        <end position="279"/>
    </location>
</feature>
<feature type="helix" evidence="7">
    <location>
        <begin position="281"/>
        <end position="285"/>
    </location>
</feature>
<feature type="helix" evidence="7">
    <location>
        <begin position="288"/>
        <end position="291"/>
    </location>
</feature>
<feature type="helix" evidence="7">
    <location>
        <begin position="308"/>
        <end position="310"/>
    </location>
</feature>
<feature type="strand" evidence="7">
    <location>
        <begin position="312"/>
        <end position="314"/>
    </location>
</feature>
<feature type="turn" evidence="7">
    <location>
        <begin position="315"/>
        <end position="317"/>
    </location>
</feature>
<feature type="helix" evidence="7">
    <location>
        <begin position="324"/>
        <end position="328"/>
    </location>
</feature>
<feature type="helix" evidence="7">
    <location>
        <begin position="340"/>
        <end position="348"/>
    </location>
</feature>
<feature type="strand" evidence="7">
    <location>
        <begin position="353"/>
        <end position="355"/>
    </location>
</feature>
<feature type="strand" evidence="7">
    <location>
        <begin position="363"/>
        <end position="365"/>
    </location>
</feature>
<feature type="helix" evidence="7">
    <location>
        <begin position="373"/>
        <end position="376"/>
    </location>
</feature>
<feature type="helix" evidence="7">
    <location>
        <begin position="379"/>
        <end position="381"/>
    </location>
</feature>
<feature type="strand" evidence="7">
    <location>
        <begin position="383"/>
        <end position="385"/>
    </location>
</feature>
<feature type="helix" evidence="7">
    <location>
        <begin position="387"/>
        <end position="389"/>
    </location>
</feature>
<feature type="turn" evidence="7">
    <location>
        <begin position="397"/>
        <end position="399"/>
    </location>
</feature>
<feature type="helix" evidence="7">
    <location>
        <begin position="400"/>
        <end position="407"/>
    </location>
</feature>
<feature type="turn" evidence="7">
    <location>
        <begin position="408"/>
        <end position="412"/>
    </location>
</feature>
<feature type="strand" evidence="7">
    <location>
        <begin position="413"/>
        <end position="415"/>
    </location>
</feature>
<feature type="helix" evidence="7">
    <location>
        <begin position="417"/>
        <end position="424"/>
    </location>
</feature>
<feature type="helix" evidence="7">
    <location>
        <begin position="426"/>
        <end position="431"/>
    </location>
</feature>
<feature type="turn" evidence="7">
    <location>
        <begin position="435"/>
        <end position="437"/>
    </location>
</feature>
<feature type="strand" evidence="7">
    <location>
        <begin position="438"/>
        <end position="440"/>
    </location>
</feature>
<feature type="turn" evidence="7">
    <location>
        <begin position="443"/>
        <end position="445"/>
    </location>
</feature>
<feature type="strand" evidence="7">
    <location>
        <begin position="450"/>
        <end position="453"/>
    </location>
</feature>
<feature type="helix" evidence="7">
    <location>
        <begin position="472"/>
        <end position="474"/>
    </location>
</feature>
<feature type="strand" evidence="8">
    <location>
        <begin position="476"/>
        <end position="479"/>
    </location>
</feature>
<feature type="turn" evidence="7">
    <location>
        <begin position="482"/>
        <end position="485"/>
    </location>
</feature>
<feature type="strand" evidence="7">
    <location>
        <begin position="492"/>
        <end position="497"/>
    </location>
</feature>
<feature type="strand" evidence="7">
    <location>
        <begin position="500"/>
        <end position="504"/>
    </location>
</feature>
<feature type="helix" evidence="7">
    <location>
        <begin position="510"/>
        <end position="512"/>
    </location>
</feature>
<feature type="helix" evidence="7">
    <location>
        <begin position="524"/>
        <end position="526"/>
    </location>
</feature>
<feature type="strand" evidence="7">
    <location>
        <begin position="533"/>
        <end position="535"/>
    </location>
</feature>
<accession>Q9P903</accession>